<organism>
    <name type="scientific">Deinococcus geothermalis (strain DSM 11300 / CIP 105573 / AG-3a)</name>
    <dbReference type="NCBI Taxonomy" id="319795"/>
    <lineage>
        <taxon>Bacteria</taxon>
        <taxon>Thermotogati</taxon>
        <taxon>Deinococcota</taxon>
        <taxon>Deinococci</taxon>
        <taxon>Deinococcales</taxon>
        <taxon>Deinococcaceae</taxon>
        <taxon>Deinococcus</taxon>
    </lineage>
</organism>
<comment type="function">
    <text evidence="1">IF-3 binds to the 30S ribosomal subunit and shifts the equilibrium between 70S ribosomes and their 50S and 30S subunits in favor of the free subunits, thus enhancing the availability of 30S subunits on which protein synthesis initiation begins.</text>
</comment>
<comment type="subunit">
    <text evidence="1">Monomer.</text>
</comment>
<comment type="subcellular location">
    <subcellularLocation>
        <location evidence="1">Cytoplasm</location>
    </subcellularLocation>
</comment>
<comment type="similarity">
    <text evidence="1">Belongs to the IF-3 family.</text>
</comment>
<sequence length="204" mass="23090">MIDIAKEHKVNEQIRVRQIRLIGAEGEQIGIIDTRDALAMAREKGLDLVMVSPQAVPPVCRLLDYGRFRYEQQQNEKENRKRARAQEVKAIKFRVKIDDHDFNTKTGHVRRFLEEGHKVKVTIMFRGRERTHPELGERILHRVAETLADIGAPEGMPSMMGMDMNMIMVPKAAPKRDSGRSESAQEAPTARSAEASRPEAPANA</sequence>
<keyword id="KW-0963">Cytoplasm</keyword>
<keyword id="KW-0396">Initiation factor</keyword>
<keyword id="KW-0648">Protein biosynthesis</keyword>
<reference key="1">
    <citation type="submission" date="2006-04" db="EMBL/GenBank/DDBJ databases">
        <title>Complete sequence of chromosome of Deinococcus geothermalis DSM 11300.</title>
        <authorList>
            <person name="Copeland A."/>
            <person name="Lucas S."/>
            <person name="Lapidus A."/>
            <person name="Barry K."/>
            <person name="Detter J.C."/>
            <person name="Glavina del Rio T."/>
            <person name="Hammon N."/>
            <person name="Israni S."/>
            <person name="Dalin E."/>
            <person name="Tice H."/>
            <person name="Pitluck S."/>
            <person name="Brettin T."/>
            <person name="Bruce D."/>
            <person name="Han C."/>
            <person name="Tapia R."/>
            <person name="Saunders E."/>
            <person name="Gilna P."/>
            <person name="Schmutz J."/>
            <person name="Larimer F."/>
            <person name="Land M."/>
            <person name="Hauser L."/>
            <person name="Kyrpides N."/>
            <person name="Kim E."/>
            <person name="Daly M.J."/>
            <person name="Fredrickson J.K."/>
            <person name="Makarova K.S."/>
            <person name="Gaidamakova E.K."/>
            <person name="Zhai M."/>
            <person name="Richardson P."/>
        </authorList>
    </citation>
    <scope>NUCLEOTIDE SEQUENCE [LARGE SCALE GENOMIC DNA]</scope>
    <source>
        <strain>DSM 11300 / CIP 105573 / AG-3a</strain>
    </source>
</reference>
<gene>
    <name evidence="1" type="primary">infC</name>
    <name type="ordered locus">Dgeo_1509</name>
</gene>
<name>IF3_DEIGD</name>
<accession>Q1IY80</accession>
<proteinExistence type="inferred from homology"/>
<protein>
    <recommendedName>
        <fullName evidence="1">Translation initiation factor IF-3</fullName>
    </recommendedName>
</protein>
<evidence type="ECO:0000255" key="1">
    <source>
        <dbReference type="HAMAP-Rule" id="MF_00080"/>
    </source>
</evidence>
<evidence type="ECO:0000256" key="2">
    <source>
        <dbReference type="SAM" id="MobiDB-lite"/>
    </source>
</evidence>
<feature type="chain" id="PRO_1000004539" description="Translation initiation factor IF-3">
    <location>
        <begin position="1"/>
        <end position="204"/>
    </location>
</feature>
<feature type="region of interest" description="Disordered" evidence="2">
    <location>
        <begin position="169"/>
        <end position="204"/>
    </location>
</feature>
<dbReference type="EMBL" id="CP000359">
    <property type="protein sequence ID" value="ABF45804.1"/>
    <property type="molecule type" value="Genomic_DNA"/>
</dbReference>
<dbReference type="RefSeq" id="WP_011530638.1">
    <property type="nucleotide sequence ID" value="NC_008025.1"/>
</dbReference>
<dbReference type="SMR" id="Q1IY80"/>
<dbReference type="STRING" id="319795.Dgeo_1509"/>
<dbReference type="KEGG" id="dge:Dgeo_1509"/>
<dbReference type="eggNOG" id="COG0290">
    <property type="taxonomic scope" value="Bacteria"/>
</dbReference>
<dbReference type="HOGENOM" id="CLU_054919_3_1_0"/>
<dbReference type="Proteomes" id="UP000002431">
    <property type="component" value="Chromosome"/>
</dbReference>
<dbReference type="GO" id="GO:0005829">
    <property type="term" value="C:cytosol"/>
    <property type="evidence" value="ECO:0007669"/>
    <property type="project" value="TreeGrafter"/>
</dbReference>
<dbReference type="GO" id="GO:0016020">
    <property type="term" value="C:membrane"/>
    <property type="evidence" value="ECO:0007669"/>
    <property type="project" value="TreeGrafter"/>
</dbReference>
<dbReference type="GO" id="GO:0043022">
    <property type="term" value="F:ribosome binding"/>
    <property type="evidence" value="ECO:0007669"/>
    <property type="project" value="TreeGrafter"/>
</dbReference>
<dbReference type="GO" id="GO:0003743">
    <property type="term" value="F:translation initiation factor activity"/>
    <property type="evidence" value="ECO:0007669"/>
    <property type="project" value="UniProtKB-UniRule"/>
</dbReference>
<dbReference type="GO" id="GO:0032790">
    <property type="term" value="P:ribosome disassembly"/>
    <property type="evidence" value="ECO:0007669"/>
    <property type="project" value="TreeGrafter"/>
</dbReference>
<dbReference type="FunFam" id="3.10.20.80:FF:000001">
    <property type="entry name" value="Translation initiation factor IF-3"/>
    <property type="match status" value="1"/>
</dbReference>
<dbReference type="FunFam" id="3.30.110.10:FF:000001">
    <property type="entry name" value="Translation initiation factor IF-3"/>
    <property type="match status" value="1"/>
</dbReference>
<dbReference type="Gene3D" id="3.30.110.10">
    <property type="entry name" value="Translation initiation factor 3 (IF-3), C-terminal domain"/>
    <property type="match status" value="1"/>
</dbReference>
<dbReference type="Gene3D" id="3.10.20.80">
    <property type="entry name" value="Translation initiation factor 3 (IF-3), N-terminal domain"/>
    <property type="match status" value="1"/>
</dbReference>
<dbReference type="HAMAP" id="MF_00080">
    <property type="entry name" value="IF_3"/>
    <property type="match status" value="1"/>
</dbReference>
<dbReference type="InterPro" id="IPR036788">
    <property type="entry name" value="T_IF-3_C_sf"/>
</dbReference>
<dbReference type="InterPro" id="IPR036787">
    <property type="entry name" value="T_IF-3_N_sf"/>
</dbReference>
<dbReference type="InterPro" id="IPR019813">
    <property type="entry name" value="Translation_initiation_fac3_CS"/>
</dbReference>
<dbReference type="InterPro" id="IPR001288">
    <property type="entry name" value="Translation_initiation_fac_3"/>
</dbReference>
<dbReference type="InterPro" id="IPR019815">
    <property type="entry name" value="Translation_initiation_fac_3_C"/>
</dbReference>
<dbReference type="InterPro" id="IPR019814">
    <property type="entry name" value="Translation_initiation_fac_3_N"/>
</dbReference>
<dbReference type="NCBIfam" id="TIGR00168">
    <property type="entry name" value="infC"/>
    <property type="match status" value="1"/>
</dbReference>
<dbReference type="PANTHER" id="PTHR10938">
    <property type="entry name" value="TRANSLATION INITIATION FACTOR IF-3"/>
    <property type="match status" value="1"/>
</dbReference>
<dbReference type="PANTHER" id="PTHR10938:SF0">
    <property type="entry name" value="TRANSLATION INITIATION FACTOR IF-3, MITOCHONDRIAL"/>
    <property type="match status" value="1"/>
</dbReference>
<dbReference type="Pfam" id="PF00707">
    <property type="entry name" value="IF3_C"/>
    <property type="match status" value="1"/>
</dbReference>
<dbReference type="Pfam" id="PF05198">
    <property type="entry name" value="IF3_N"/>
    <property type="match status" value="1"/>
</dbReference>
<dbReference type="SUPFAM" id="SSF55200">
    <property type="entry name" value="Translation initiation factor IF3, C-terminal domain"/>
    <property type="match status" value="1"/>
</dbReference>
<dbReference type="SUPFAM" id="SSF54364">
    <property type="entry name" value="Translation initiation factor IF3, N-terminal domain"/>
    <property type="match status" value="1"/>
</dbReference>
<dbReference type="PROSITE" id="PS00938">
    <property type="entry name" value="IF3"/>
    <property type="match status" value="1"/>
</dbReference>